<proteinExistence type="inferred from homology"/>
<gene>
    <name evidence="1" type="primary">rps7</name>
</gene>
<protein>
    <recommendedName>
        <fullName evidence="1">Small ribosomal subunit protein uS7c</fullName>
    </recommendedName>
    <alternativeName>
        <fullName evidence="1">30S ribosomal protein S7, chloroplastic</fullName>
    </alternativeName>
</protein>
<keyword id="KW-0150">Chloroplast</keyword>
<keyword id="KW-0934">Plastid</keyword>
<keyword id="KW-0687">Ribonucleoprotein</keyword>
<keyword id="KW-0689">Ribosomal protein</keyword>
<keyword id="KW-0694">RNA-binding</keyword>
<keyword id="KW-0699">rRNA-binding</keyword>
<comment type="function">
    <text evidence="1">One of the primary rRNA binding proteins, it binds directly to 16S rRNA where it nucleates assembly of the head domain of the 30S subunit.</text>
</comment>
<comment type="subunit">
    <text evidence="1">Part of the 30S ribosomal subunit.</text>
</comment>
<comment type="subcellular location">
    <subcellularLocation>
        <location evidence="1 4">Plastid</location>
        <location evidence="1 4">Chloroplast</location>
    </subcellularLocation>
</comment>
<comment type="similarity">
    <text evidence="1">Belongs to the universal ribosomal protein uS7 family.</text>
</comment>
<comment type="caution">
    <text evidence="2 3">A mitochondrially-encoded gene whose putative product is 100% identical to this plastid-encoded gene is the result of gene transfer. It is not known if the mitochondrial gene is transcribed, B.vulgaris mitochondrial DNA encodes a different rps7 that is more mitochondrial-like.</text>
</comment>
<geneLocation type="chloroplast"/>
<organism>
    <name type="scientific">Beta vulgaris</name>
    <name type="common">Sugar beet</name>
    <dbReference type="NCBI Taxonomy" id="161934"/>
    <lineage>
        <taxon>Eukaryota</taxon>
        <taxon>Viridiplantae</taxon>
        <taxon>Streptophyta</taxon>
        <taxon>Embryophyta</taxon>
        <taxon>Tracheophyta</taxon>
        <taxon>Spermatophyta</taxon>
        <taxon>Magnoliopsida</taxon>
        <taxon>eudicotyledons</taxon>
        <taxon>Gunneridae</taxon>
        <taxon>Pentapetalae</taxon>
        <taxon>Caryophyllales</taxon>
        <taxon>Chenopodiaceae</taxon>
        <taxon>Betoideae</taxon>
        <taxon>Beta</taxon>
    </lineage>
</organism>
<evidence type="ECO:0000255" key="1">
    <source>
        <dbReference type="HAMAP-Rule" id="MF_00480"/>
    </source>
</evidence>
<evidence type="ECO:0000305" key="2"/>
<evidence type="ECO:0000305" key="3">
    <source>
    </source>
</evidence>
<evidence type="ECO:0000305" key="4">
    <source ref="1"/>
</evidence>
<evidence type="ECO:0000312" key="5">
    <source>
        <dbReference type="EMBL" id="BAA84540.1"/>
    </source>
</evidence>
<evidence type="ECO:0000312" key="6">
    <source>
        <dbReference type="EMBL" id="BAA99287.1"/>
    </source>
</evidence>
<dbReference type="EMBL" id="AB032426">
    <property type="protein sequence ID" value="BAA84540.1"/>
    <property type="molecule type" value="Genomic_DNA"/>
</dbReference>
<dbReference type="EMBL" id="BA000009">
    <property type="protein sequence ID" value="BAA99287.1"/>
    <property type="molecule type" value="Genomic_DNA"/>
</dbReference>
<dbReference type="SMR" id="Q9TM55"/>
<dbReference type="KEGG" id="bvg:809466"/>
<dbReference type="OMA" id="DDTHRMA"/>
<dbReference type="GO" id="GO:0009507">
    <property type="term" value="C:chloroplast"/>
    <property type="evidence" value="ECO:0007669"/>
    <property type="project" value="UniProtKB-SubCell"/>
</dbReference>
<dbReference type="GO" id="GO:0015935">
    <property type="term" value="C:small ribosomal subunit"/>
    <property type="evidence" value="ECO:0007669"/>
    <property type="project" value="InterPro"/>
</dbReference>
<dbReference type="GO" id="GO:0019843">
    <property type="term" value="F:rRNA binding"/>
    <property type="evidence" value="ECO:0007669"/>
    <property type="project" value="UniProtKB-UniRule"/>
</dbReference>
<dbReference type="GO" id="GO:0003735">
    <property type="term" value="F:structural constituent of ribosome"/>
    <property type="evidence" value="ECO:0007669"/>
    <property type="project" value="InterPro"/>
</dbReference>
<dbReference type="GO" id="GO:0006412">
    <property type="term" value="P:translation"/>
    <property type="evidence" value="ECO:0007669"/>
    <property type="project" value="UniProtKB-UniRule"/>
</dbReference>
<dbReference type="CDD" id="cd14871">
    <property type="entry name" value="uS7_Chloroplast"/>
    <property type="match status" value="1"/>
</dbReference>
<dbReference type="FunFam" id="1.10.455.10:FF:000001">
    <property type="entry name" value="30S ribosomal protein S7"/>
    <property type="match status" value="1"/>
</dbReference>
<dbReference type="Gene3D" id="1.10.455.10">
    <property type="entry name" value="Ribosomal protein S7 domain"/>
    <property type="match status" value="1"/>
</dbReference>
<dbReference type="HAMAP" id="MF_00480_B">
    <property type="entry name" value="Ribosomal_uS7_B"/>
    <property type="match status" value="1"/>
</dbReference>
<dbReference type="InterPro" id="IPR000235">
    <property type="entry name" value="Ribosomal_uS7"/>
</dbReference>
<dbReference type="InterPro" id="IPR005717">
    <property type="entry name" value="Ribosomal_uS7_bac/org-type"/>
</dbReference>
<dbReference type="InterPro" id="IPR020606">
    <property type="entry name" value="Ribosomal_uS7_CS"/>
</dbReference>
<dbReference type="InterPro" id="IPR023798">
    <property type="entry name" value="Ribosomal_uS7_dom"/>
</dbReference>
<dbReference type="InterPro" id="IPR036823">
    <property type="entry name" value="Ribosomal_uS7_dom_sf"/>
</dbReference>
<dbReference type="NCBIfam" id="TIGR01029">
    <property type="entry name" value="rpsG_bact"/>
    <property type="match status" value="1"/>
</dbReference>
<dbReference type="PANTHER" id="PTHR11205">
    <property type="entry name" value="RIBOSOMAL PROTEIN S7"/>
    <property type="match status" value="1"/>
</dbReference>
<dbReference type="Pfam" id="PF00177">
    <property type="entry name" value="Ribosomal_S7"/>
    <property type="match status" value="1"/>
</dbReference>
<dbReference type="PIRSF" id="PIRSF002122">
    <property type="entry name" value="RPS7p_RPS7a_RPS5e_RPS7o"/>
    <property type="match status" value="1"/>
</dbReference>
<dbReference type="SUPFAM" id="SSF47973">
    <property type="entry name" value="Ribosomal protein S7"/>
    <property type="match status" value="1"/>
</dbReference>
<dbReference type="PROSITE" id="PS00052">
    <property type="entry name" value="RIBOSOMAL_S7"/>
    <property type="match status" value="1"/>
</dbReference>
<accession>Q9TM55</accession>
<name>RR7_BETVU</name>
<feature type="chain" id="PRO_0000124431" description="Small ribosomal subunit protein uS7c">
    <location>
        <begin position="1"/>
        <end position="155"/>
    </location>
</feature>
<reference evidence="5" key="1">
    <citation type="submission" date="1999-09" db="EMBL/GenBank/DDBJ databases">
        <title>Nucleotide sequence of the chloroplast rrn16-trnV-rps12-ndhB in sugar beet.</title>
        <authorList>
            <person name="Kubo T."/>
            <person name="Mikami T."/>
            <person name="Satoh M."/>
        </authorList>
    </citation>
    <scope>NUCLEOTIDE SEQUENCE [GENOMIC DNA] (PLASTID ENCODED RPS7)</scope>
    <source>
        <strain>cv. TK81-O</strain>
    </source>
</reference>
<reference evidence="6" key="2">
    <citation type="journal article" date="2000" name="Nucleic Acids Res.">
        <title>The complete nucleotide sequence of the mitochondrial genome of sugar beet (Beta vulgaris L.) reveals a novel gene for tRNACys(GCA).</title>
        <authorList>
            <person name="Kubo T."/>
            <person name="Nishizawa S."/>
            <person name="Sugawara A."/>
            <person name="Itchoda N."/>
            <person name="Estiati A."/>
            <person name="Mikami T."/>
        </authorList>
    </citation>
    <scope>NUCLEOTIDE SEQUENCE [GENOMIC DNA] (MITOCHONDRIAL ENCODED RPS7)</scope>
    <source>
        <strain>cv. TK81-O</strain>
    </source>
</reference>
<sequence>MSRRGTVEEKTAKSDPIYRNRLVNMLVNRILKHGKKSLAYQILYRAVKKIQQKTETNPLSVLRQAIRGVTPDIAVKARRVGGSTHQVPIEIGSTQGKALAIRWLLGAARKRPGRNMAFKLSSELVDAAKGSGDAIRKKEETHRMAEANRAFAHFR</sequence>